<comment type="function">
    <text evidence="1">Produces ATP from ADP in the presence of a proton gradient across the membrane. The alpha chain is a regulatory subunit.</text>
</comment>
<comment type="catalytic activity">
    <reaction evidence="1">
        <text>ATP + H2O + 4 H(+)(in) = ADP + phosphate + 5 H(+)(out)</text>
        <dbReference type="Rhea" id="RHEA:57720"/>
        <dbReference type="ChEBI" id="CHEBI:15377"/>
        <dbReference type="ChEBI" id="CHEBI:15378"/>
        <dbReference type="ChEBI" id="CHEBI:30616"/>
        <dbReference type="ChEBI" id="CHEBI:43474"/>
        <dbReference type="ChEBI" id="CHEBI:456216"/>
        <dbReference type="EC" id="7.1.2.2"/>
    </reaction>
</comment>
<comment type="subunit">
    <text evidence="1">F-type ATPases have 2 components, CF(1) - the catalytic core - and CF(0) - the membrane proton channel. CF(1) has five subunits: alpha(3), beta(3), gamma(1), delta(1), epsilon(1). CF(0) has three main subunits: a(1), b(2) and c(9-12). The alpha and beta chains form an alternating ring which encloses part of the gamma chain. CF(1) is attached to CF(0) by a central stalk formed by the gamma and epsilon chains, while a peripheral stalk is formed by the delta and b chains.</text>
</comment>
<comment type="subcellular location">
    <subcellularLocation>
        <location evidence="1">Cell membrane</location>
        <topology evidence="1">Peripheral membrane protein</topology>
    </subcellularLocation>
</comment>
<comment type="similarity">
    <text evidence="1">Belongs to the ATPase alpha/beta chains family.</text>
</comment>
<sequence length="545" mass="58555">MAELTISSDEIRSAIESYTQSYTPETSIEEVGVVTDTSDGIAHVSGLPSAMANELLEFPGGVLGVALNLEDREIGAVILGEFAEIEEGQQVRRTGDVLSVPVGDKFLGRVVNPLGQPIDGLGEIEAEEQRVLELQAATVLQRQPVEEPLATGITAIDALTAIGRGQRQLIIGDRKTGKTAVCIDAILNQKANWETGDPTKQVRCIYVAIGQKGSTIAGVKAALEEHGALEYTTIVAAPASDSAGFKWLAPYTGSAIGQHWMYQGKHVLIVFDDLTKQAEAYRAISLLLRRPPGREAYPGDVFYLHSRLLERCAKLSDEMGGGSMTGLPIIETKANDISAFIPTNVISITDGQVFLESDLFNKGVRPAINVGTSVSRVGGAAQTKGMKKVAGSLRLEMAQYRELEAFSAFASDLDAASLAQLERGARWVELLKQDQYSPVPVEDQIVSIFLVDQGYYDSVPVGDIRRFNAELLEDLHRSAADAFKSIEGGKVLEGEAAEAIKAATDKFKQGFLASDGSRVVNEAAAGELGHEEVESLSVTRKHVEK</sequence>
<name>ATPA_NOCFA</name>
<accession>Q5Z0Y3</accession>
<proteinExistence type="inferred from homology"/>
<evidence type="ECO:0000255" key="1">
    <source>
        <dbReference type="HAMAP-Rule" id="MF_01346"/>
    </source>
</evidence>
<reference key="1">
    <citation type="journal article" date="2004" name="Proc. Natl. Acad. Sci. U.S.A.">
        <title>The complete genomic sequence of Nocardia farcinica IFM 10152.</title>
        <authorList>
            <person name="Ishikawa J."/>
            <person name="Yamashita A."/>
            <person name="Mikami Y."/>
            <person name="Hoshino Y."/>
            <person name="Kurita H."/>
            <person name="Hotta K."/>
            <person name="Shiba T."/>
            <person name="Hattori M."/>
        </authorList>
    </citation>
    <scope>NUCLEOTIDE SEQUENCE [LARGE SCALE GENOMIC DNA]</scope>
    <source>
        <strain>IFM 10152</strain>
    </source>
</reference>
<gene>
    <name evidence="1" type="primary">atpA</name>
    <name type="ordered locus">NFA_10630</name>
</gene>
<keyword id="KW-0066">ATP synthesis</keyword>
<keyword id="KW-0067">ATP-binding</keyword>
<keyword id="KW-1003">Cell membrane</keyword>
<keyword id="KW-0139">CF(1)</keyword>
<keyword id="KW-0375">Hydrogen ion transport</keyword>
<keyword id="KW-0406">Ion transport</keyword>
<keyword id="KW-0472">Membrane</keyword>
<keyword id="KW-0547">Nucleotide-binding</keyword>
<keyword id="KW-1185">Reference proteome</keyword>
<keyword id="KW-1278">Translocase</keyword>
<keyword id="KW-0813">Transport</keyword>
<feature type="chain" id="PRO_0000238308" description="ATP synthase subunit alpha">
    <location>
        <begin position="1"/>
        <end position="545"/>
    </location>
</feature>
<feature type="binding site" evidence="1">
    <location>
        <begin position="172"/>
        <end position="179"/>
    </location>
    <ligand>
        <name>ATP</name>
        <dbReference type="ChEBI" id="CHEBI:30616"/>
    </ligand>
</feature>
<feature type="site" description="Required for activity" evidence="1">
    <location>
        <position position="373"/>
    </location>
</feature>
<organism>
    <name type="scientific">Nocardia farcinica (strain IFM 10152)</name>
    <dbReference type="NCBI Taxonomy" id="247156"/>
    <lineage>
        <taxon>Bacteria</taxon>
        <taxon>Bacillati</taxon>
        <taxon>Actinomycetota</taxon>
        <taxon>Actinomycetes</taxon>
        <taxon>Mycobacteriales</taxon>
        <taxon>Nocardiaceae</taxon>
        <taxon>Nocardia</taxon>
    </lineage>
</organism>
<dbReference type="EC" id="7.1.2.2" evidence="1"/>
<dbReference type="EMBL" id="AP006618">
    <property type="protein sequence ID" value="BAD55908.1"/>
    <property type="molecule type" value="Genomic_DNA"/>
</dbReference>
<dbReference type="RefSeq" id="WP_011207593.1">
    <property type="nucleotide sequence ID" value="NC_006361.1"/>
</dbReference>
<dbReference type="SMR" id="Q5Z0Y3"/>
<dbReference type="STRING" id="247156.NFA_10630"/>
<dbReference type="GeneID" id="61131885"/>
<dbReference type="KEGG" id="nfa:NFA_10630"/>
<dbReference type="eggNOG" id="COG0056">
    <property type="taxonomic scope" value="Bacteria"/>
</dbReference>
<dbReference type="HOGENOM" id="CLU_010091_2_1_11"/>
<dbReference type="OrthoDB" id="9803053at2"/>
<dbReference type="Proteomes" id="UP000006820">
    <property type="component" value="Chromosome"/>
</dbReference>
<dbReference type="GO" id="GO:0005886">
    <property type="term" value="C:plasma membrane"/>
    <property type="evidence" value="ECO:0007669"/>
    <property type="project" value="UniProtKB-SubCell"/>
</dbReference>
<dbReference type="GO" id="GO:0045259">
    <property type="term" value="C:proton-transporting ATP synthase complex"/>
    <property type="evidence" value="ECO:0007669"/>
    <property type="project" value="UniProtKB-KW"/>
</dbReference>
<dbReference type="GO" id="GO:0043531">
    <property type="term" value="F:ADP binding"/>
    <property type="evidence" value="ECO:0007669"/>
    <property type="project" value="TreeGrafter"/>
</dbReference>
<dbReference type="GO" id="GO:0005524">
    <property type="term" value="F:ATP binding"/>
    <property type="evidence" value="ECO:0007669"/>
    <property type="project" value="UniProtKB-UniRule"/>
</dbReference>
<dbReference type="GO" id="GO:0046933">
    <property type="term" value="F:proton-transporting ATP synthase activity, rotational mechanism"/>
    <property type="evidence" value="ECO:0007669"/>
    <property type="project" value="UniProtKB-UniRule"/>
</dbReference>
<dbReference type="CDD" id="cd18113">
    <property type="entry name" value="ATP-synt_F1_alpha_C"/>
    <property type="match status" value="1"/>
</dbReference>
<dbReference type="CDD" id="cd18116">
    <property type="entry name" value="ATP-synt_F1_alpha_N"/>
    <property type="match status" value="1"/>
</dbReference>
<dbReference type="CDD" id="cd01132">
    <property type="entry name" value="F1-ATPase_alpha_CD"/>
    <property type="match status" value="1"/>
</dbReference>
<dbReference type="FunFam" id="1.20.150.20:FF:000001">
    <property type="entry name" value="ATP synthase subunit alpha"/>
    <property type="match status" value="1"/>
</dbReference>
<dbReference type="FunFam" id="3.40.50.300:FF:000002">
    <property type="entry name" value="ATP synthase subunit alpha"/>
    <property type="match status" value="1"/>
</dbReference>
<dbReference type="Gene3D" id="2.40.30.20">
    <property type="match status" value="1"/>
</dbReference>
<dbReference type="Gene3D" id="1.20.150.20">
    <property type="entry name" value="ATP synthase alpha/beta chain, C-terminal domain"/>
    <property type="match status" value="1"/>
</dbReference>
<dbReference type="Gene3D" id="3.40.50.300">
    <property type="entry name" value="P-loop containing nucleotide triphosphate hydrolases"/>
    <property type="match status" value="1"/>
</dbReference>
<dbReference type="HAMAP" id="MF_01346">
    <property type="entry name" value="ATP_synth_alpha_bact"/>
    <property type="match status" value="1"/>
</dbReference>
<dbReference type="InterPro" id="IPR023366">
    <property type="entry name" value="ATP_synth_asu-like_sf"/>
</dbReference>
<dbReference type="InterPro" id="IPR000793">
    <property type="entry name" value="ATP_synth_asu_C"/>
</dbReference>
<dbReference type="InterPro" id="IPR038376">
    <property type="entry name" value="ATP_synth_asu_C_sf"/>
</dbReference>
<dbReference type="InterPro" id="IPR033732">
    <property type="entry name" value="ATP_synth_F1_a_nt-bd_dom"/>
</dbReference>
<dbReference type="InterPro" id="IPR005294">
    <property type="entry name" value="ATP_synth_F1_asu"/>
</dbReference>
<dbReference type="InterPro" id="IPR020003">
    <property type="entry name" value="ATPase_a/bsu_AS"/>
</dbReference>
<dbReference type="InterPro" id="IPR004100">
    <property type="entry name" value="ATPase_F1/V1/A1_a/bsu_N"/>
</dbReference>
<dbReference type="InterPro" id="IPR036121">
    <property type="entry name" value="ATPase_F1/V1/A1_a/bsu_N_sf"/>
</dbReference>
<dbReference type="InterPro" id="IPR000194">
    <property type="entry name" value="ATPase_F1/V1/A1_a/bsu_nucl-bd"/>
</dbReference>
<dbReference type="InterPro" id="IPR027417">
    <property type="entry name" value="P-loop_NTPase"/>
</dbReference>
<dbReference type="NCBIfam" id="TIGR00962">
    <property type="entry name" value="atpA"/>
    <property type="match status" value="1"/>
</dbReference>
<dbReference type="NCBIfam" id="NF009884">
    <property type="entry name" value="PRK13343.1"/>
    <property type="match status" value="1"/>
</dbReference>
<dbReference type="PANTHER" id="PTHR48082">
    <property type="entry name" value="ATP SYNTHASE SUBUNIT ALPHA, MITOCHONDRIAL"/>
    <property type="match status" value="1"/>
</dbReference>
<dbReference type="PANTHER" id="PTHR48082:SF2">
    <property type="entry name" value="ATP SYNTHASE SUBUNIT ALPHA, MITOCHONDRIAL"/>
    <property type="match status" value="1"/>
</dbReference>
<dbReference type="Pfam" id="PF00006">
    <property type="entry name" value="ATP-synt_ab"/>
    <property type="match status" value="1"/>
</dbReference>
<dbReference type="Pfam" id="PF00306">
    <property type="entry name" value="ATP-synt_ab_C"/>
    <property type="match status" value="1"/>
</dbReference>
<dbReference type="Pfam" id="PF02874">
    <property type="entry name" value="ATP-synt_ab_N"/>
    <property type="match status" value="1"/>
</dbReference>
<dbReference type="SUPFAM" id="SSF47917">
    <property type="entry name" value="C-terminal domain of alpha and beta subunits of F1 ATP synthase"/>
    <property type="match status" value="1"/>
</dbReference>
<dbReference type="SUPFAM" id="SSF50615">
    <property type="entry name" value="N-terminal domain of alpha and beta subunits of F1 ATP synthase"/>
    <property type="match status" value="1"/>
</dbReference>
<dbReference type="SUPFAM" id="SSF52540">
    <property type="entry name" value="P-loop containing nucleoside triphosphate hydrolases"/>
    <property type="match status" value="1"/>
</dbReference>
<dbReference type="PROSITE" id="PS00152">
    <property type="entry name" value="ATPASE_ALPHA_BETA"/>
    <property type="match status" value="1"/>
</dbReference>
<protein>
    <recommendedName>
        <fullName evidence="1">ATP synthase subunit alpha</fullName>
        <ecNumber evidence="1">7.1.2.2</ecNumber>
    </recommendedName>
    <alternativeName>
        <fullName evidence="1">ATP synthase F1 sector subunit alpha</fullName>
    </alternativeName>
    <alternativeName>
        <fullName evidence="1">F-ATPase subunit alpha</fullName>
    </alternativeName>
</protein>